<reference key="1">
    <citation type="submission" date="2009-07" db="EMBL/GenBank/DDBJ databases">
        <title>Complete sequence of Pectobacterium carotovorum subsp. carotovorum PC1.</title>
        <authorList>
            <consortium name="US DOE Joint Genome Institute"/>
            <person name="Lucas S."/>
            <person name="Copeland A."/>
            <person name="Lapidus A."/>
            <person name="Glavina del Rio T."/>
            <person name="Tice H."/>
            <person name="Bruce D."/>
            <person name="Goodwin L."/>
            <person name="Pitluck S."/>
            <person name="Munk A.C."/>
            <person name="Brettin T."/>
            <person name="Detter J.C."/>
            <person name="Han C."/>
            <person name="Tapia R."/>
            <person name="Larimer F."/>
            <person name="Land M."/>
            <person name="Hauser L."/>
            <person name="Kyrpides N."/>
            <person name="Mikhailova N."/>
            <person name="Balakrishnan V."/>
            <person name="Glasner J."/>
            <person name="Perna N.T."/>
        </authorList>
    </citation>
    <scope>NUCLEOTIDE SEQUENCE [LARGE SCALE GENOMIC DNA]</scope>
    <source>
        <strain>PC1</strain>
    </source>
</reference>
<protein>
    <recommendedName>
        <fullName evidence="1">Met repressor</fullName>
    </recommendedName>
    <alternativeName>
        <fullName evidence="1">Met regulon regulatory protein MetJ</fullName>
    </alternativeName>
</protein>
<evidence type="ECO:0000255" key="1">
    <source>
        <dbReference type="HAMAP-Rule" id="MF_00744"/>
    </source>
</evidence>
<organism>
    <name type="scientific">Pectobacterium carotovorum subsp. carotovorum (strain PC1)</name>
    <dbReference type="NCBI Taxonomy" id="561230"/>
    <lineage>
        <taxon>Bacteria</taxon>
        <taxon>Pseudomonadati</taxon>
        <taxon>Pseudomonadota</taxon>
        <taxon>Gammaproteobacteria</taxon>
        <taxon>Enterobacterales</taxon>
        <taxon>Pectobacteriaceae</taxon>
        <taxon>Pectobacterium</taxon>
    </lineage>
</organism>
<dbReference type="EMBL" id="CP001657">
    <property type="protein sequence ID" value="ACT11237.1"/>
    <property type="molecule type" value="Genomic_DNA"/>
</dbReference>
<dbReference type="RefSeq" id="WP_005973355.1">
    <property type="nucleotide sequence ID" value="NC_012917.1"/>
</dbReference>
<dbReference type="SMR" id="C6DHN7"/>
<dbReference type="STRING" id="561230.PC1_0176"/>
<dbReference type="GeneID" id="93392218"/>
<dbReference type="KEGG" id="pct:PC1_0176"/>
<dbReference type="eggNOG" id="COG3060">
    <property type="taxonomic scope" value="Bacteria"/>
</dbReference>
<dbReference type="HOGENOM" id="CLU_142318_0_0_6"/>
<dbReference type="OrthoDB" id="5680896at2"/>
<dbReference type="Proteomes" id="UP000002736">
    <property type="component" value="Chromosome"/>
</dbReference>
<dbReference type="GO" id="GO:0005737">
    <property type="term" value="C:cytoplasm"/>
    <property type="evidence" value="ECO:0007669"/>
    <property type="project" value="UniProtKB-SubCell"/>
</dbReference>
<dbReference type="GO" id="GO:0003677">
    <property type="term" value="F:DNA binding"/>
    <property type="evidence" value="ECO:0007669"/>
    <property type="project" value="UniProtKB-KW"/>
</dbReference>
<dbReference type="GO" id="GO:0003700">
    <property type="term" value="F:DNA-binding transcription factor activity"/>
    <property type="evidence" value="ECO:0007669"/>
    <property type="project" value="InterPro"/>
</dbReference>
<dbReference type="GO" id="GO:0009086">
    <property type="term" value="P:methionine biosynthetic process"/>
    <property type="evidence" value="ECO:0007669"/>
    <property type="project" value="UniProtKB-UniRule"/>
</dbReference>
<dbReference type="GO" id="GO:0045892">
    <property type="term" value="P:negative regulation of DNA-templated transcription"/>
    <property type="evidence" value="ECO:0007669"/>
    <property type="project" value="UniProtKB-UniRule"/>
</dbReference>
<dbReference type="CDD" id="cd00490">
    <property type="entry name" value="Met_repressor_MetJ"/>
    <property type="match status" value="1"/>
</dbReference>
<dbReference type="FunFam" id="1.10.140.10:FF:000001">
    <property type="entry name" value="Met repressor"/>
    <property type="match status" value="1"/>
</dbReference>
<dbReference type="Gene3D" id="1.10.140.10">
    <property type="entry name" value="MET Apo-Repressor, subunit A"/>
    <property type="match status" value="1"/>
</dbReference>
<dbReference type="HAMAP" id="MF_00744">
    <property type="entry name" value="MetJ"/>
    <property type="match status" value="1"/>
</dbReference>
<dbReference type="InterPro" id="IPR002084">
    <property type="entry name" value="Met_repressor_MetJ"/>
</dbReference>
<dbReference type="InterPro" id="IPR023453">
    <property type="entry name" value="Met_repressor_MetJ_dom_sf"/>
</dbReference>
<dbReference type="InterPro" id="IPR010985">
    <property type="entry name" value="Ribbon_hlx_hlx"/>
</dbReference>
<dbReference type="NCBIfam" id="NF003622">
    <property type="entry name" value="PRK05264.1"/>
    <property type="match status" value="1"/>
</dbReference>
<dbReference type="Pfam" id="PF01340">
    <property type="entry name" value="MetJ"/>
    <property type="match status" value="1"/>
</dbReference>
<dbReference type="SUPFAM" id="SSF47598">
    <property type="entry name" value="Ribbon-helix-helix"/>
    <property type="match status" value="1"/>
</dbReference>
<name>METJ_PECCP</name>
<proteinExistence type="inferred from homology"/>
<keyword id="KW-0028">Amino-acid biosynthesis</keyword>
<keyword id="KW-0963">Cytoplasm</keyword>
<keyword id="KW-0238">DNA-binding</keyword>
<keyword id="KW-0486">Methionine biosynthesis</keyword>
<keyword id="KW-0678">Repressor</keyword>
<keyword id="KW-0804">Transcription</keyword>
<keyword id="KW-0805">Transcription regulation</keyword>
<sequence>MAEWNGEYVSPYAEHGKKSEQVKKITVSIPLKVLKILTDERTRRQVNNLRHATNSELLCEAFLHAFTGQPLPNDEDLRKERSDEIPEAAKIIMREMGIDPDTWEY</sequence>
<gene>
    <name evidence="1" type="primary">metJ</name>
    <name type="ordered locus">PC1_0176</name>
</gene>
<feature type="chain" id="PRO_1000212836" description="Met repressor">
    <location>
        <begin position="1"/>
        <end position="105"/>
    </location>
</feature>
<accession>C6DHN7</accession>
<comment type="function">
    <text evidence="1">This regulatory protein, when combined with SAM (S-adenosylmethionine) represses the expression of the methionine regulon and of enzymes involved in SAM synthesis.</text>
</comment>
<comment type="subunit">
    <text evidence="1">Homodimer.</text>
</comment>
<comment type="subcellular location">
    <subcellularLocation>
        <location evidence="1">Cytoplasm</location>
    </subcellularLocation>
</comment>
<comment type="domain">
    <text>Does not bind DNA by a helix-turn-helix motif.</text>
</comment>
<comment type="similarity">
    <text evidence="1">Belongs to the MetJ family.</text>
</comment>